<gene>
    <name evidence="4" type="primary">ATPF2</name>
    <name evidence="3" type="synonym">atpG</name>
    <name type="ORF">CHLREDRAFT_206190</name>
</gene>
<name>ATPF2_CHLRE</name>
<sequence length="209" mass="22479">MASLLARPQQAVVRAAKPAAARPLRLVVRASAQKPQQQLAQLAKPALSAIVANALMAMPAAAEAGKIFDFNLTLPVMAGEFLLLMVFLEKTWFTPVGKVLDERDNLIRSKLGSVKDNTGDVDKLVLEAETILKSARSDVSAMINTKKAAKQSELDKTYNEAKAKITAEVESSIAGLEQESASMLKSLDAQVDKISAEVLKRVLPEGVRV</sequence>
<keyword id="KW-0067">ATP-binding</keyword>
<keyword id="KW-0138">CF(0)</keyword>
<keyword id="KW-0150">Chloroplast</keyword>
<keyword id="KW-0903">Direct protein sequencing</keyword>
<keyword id="KW-0375">Hydrogen ion transport</keyword>
<keyword id="KW-0406">Ion transport</keyword>
<keyword id="KW-0472">Membrane</keyword>
<keyword id="KW-0547">Nucleotide-binding</keyword>
<keyword id="KW-0934">Plastid</keyword>
<keyword id="KW-0793">Thylakoid</keyword>
<keyword id="KW-0809">Transit peptide</keyword>
<keyword id="KW-0812">Transmembrane</keyword>
<keyword id="KW-1133">Transmembrane helix</keyword>
<keyword id="KW-0813">Transport</keyword>
<comment type="function">
    <text evidence="2">F(1)F(0) ATP synthase produces ATP from ADP in the presence of a proton or sodium gradient. F-type ATPases consist of two structural domains, F(1) containing the extramembraneous catalytic core and F(0) containing the membrane proton channel, linked together by a central stalk and a peripheral stalk. During catalysis, ATP synthesis in the catalytic domain of F(1) is coupled via a rotary mechanism of the central stalk subunits to proton translocation.</text>
</comment>
<comment type="function">
    <text evidence="4">Component of the F(0) channel, it forms part of the peripheral stalk, linking F(1) to F(0). The b'-subunit is a diverged and duplicated form of b found in plants and photosynthetic bacteria.</text>
</comment>
<comment type="subunit">
    <text evidence="2">F-type ATPases have 2 components, F(1) - the catalytic core - and F(0) - the membrane proton channel. F(1) has five subunits: alpha(3), beta(3), gamma(1), delta(1), epsilon(1). F(0) has four main subunits: a(1), b(1), b'(1) and c(10-14). The alpha and beta chains form an alternating ring which encloses part of the gamma chain. F(1) is attached to F(0) by a central stalk formed by the gamma and epsilon chains, while a peripheral stalk is formed by the delta, b and b' chains.</text>
</comment>
<comment type="subcellular location">
    <subcellularLocation>
        <location evidence="2">Plastid</location>
        <location evidence="2">Chloroplast thylakoid membrane</location>
        <topology evidence="1">Single-pass membrane protein</topology>
    </subcellularLocation>
</comment>
<comment type="miscellaneous">
    <text evidence="4">In plastids the F-type ATPase is also known as CF(1)CF(0).</text>
</comment>
<comment type="similarity">
    <text evidence="4">Belongs to the ATPase B chain family.</text>
</comment>
<evidence type="ECO:0000255" key="1"/>
<evidence type="ECO:0000269" key="2">
    <source>
    </source>
</evidence>
<evidence type="ECO:0000303" key="3">
    <source>
    </source>
</evidence>
<evidence type="ECO:0000305" key="4"/>
<reference key="1">
    <citation type="journal article" date="2007" name="Science">
        <title>The Chlamydomonas genome reveals the evolution of key animal and plant functions.</title>
        <authorList>
            <person name="Merchant S.S."/>
            <person name="Prochnik S.E."/>
            <person name="Vallon O."/>
            <person name="Harris E.H."/>
            <person name="Karpowicz S.J."/>
            <person name="Witman G.B."/>
            <person name="Terry A."/>
            <person name="Salamov A."/>
            <person name="Fritz-Laylin L.K."/>
            <person name="Marechal-Drouard L."/>
            <person name="Marshall W.F."/>
            <person name="Qu L.H."/>
            <person name="Nelson D.R."/>
            <person name="Sanderfoot A.A."/>
            <person name="Spalding M.H."/>
            <person name="Kapitonov V.V."/>
            <person name="Ren Q."/>
            <person name="Ferris P."/>
            <person name="Lindquist E."/>
            <person name="Shapiro H."/>
            <person name="Lucas S.M."/>
            <person name="Grimwood J."/>
            <person name="Schmutz J."/>
            <person name="Cardol P."/>
            <person name="Cerutti H."/>
            <person name="Chanfreau G."/>
            <person name="Chen C.L."/>
            <person name="Cognat V."/>
            <person name="Croft M.T."/>
            <person name="Dent R."/>
            <person name="Dutcher S."/>
            <person name="Fernandez E."/>
            <person name="Fukuzawa H."/>
            <person name="Gonzalez-Ballester D."/>
            <person name="Gonzalez-Halphen D."/>
            <person name="Hallmann A."/>
            <person name="Hanikenne M."/>
            <person name="Hippler M."/>
            <person name="Inwood W."/>
            <person name="Jabbari K."/>
            <person name="Kalanon M."/>
            <person name="Kuras R."/>
            <person name="Lefebvre P.A."/>
            <person name="Lemaire S.D."/>
            <person name="Lobanov A.V."/>
            <person name="Lohr M."/>
            <person name="Manuell A."/>
            <person name="Meier I."/>
            <person name="Mets L."/>
            <person name="Mittag M."/>
            <person name="Mittelmeier T."/>
            <person name="Moroney J.V."/>
            <person name="Moseley J."/>
            <person name="Napoli C."/>
            <person name="Nedelcu A.M."/>
            <person name="Niyogi K."/>
            <person name="Novoselov S.V."/>
            <person name="Paulsen I.T."/>
            <person name="Pazour G.J."/>
            <person name="Purton S."/>
            <person name="Ral J.P."/>
            <person name="Riano-Pachon D.M."/>
            <person name="Riekhof W."/>
            <person name="Rymarquis L."/>
            <person name="Schroda M."/>
            <person name="Stern D."/>
            <person name="Umen J."/>
            <person name="Willows R."/>
            <person name="Wilson N."/>
            <person name="Zimmer S.L."/>
            <person name="Allmer J."/>
            <person name="Balk J."/>
            <person name="Bisova K."/>
            <person name="Chen C.J."/>
            <person name="Elias M."/>
            <person name="Gendler K."/>
            <person name="Hauser C."/>
            <person name="Lamb M.R."/>
            <person name="Ledford H."/>
            <person name="Long J.C."/>
            <person name="Minagawa J."/>
            <person name="Page M.D."/>
            <person name="Pan J."/>
            <person name="Pootakham W."/>
            <person name="Roje S."/>
            <person name="Rose A."/>
            <person name="Stahlberg E."/>
            <person name="Terauchi A.M."/>
            <person name="Yang P."/>
            <person name="Ball S."/>
            <person name="Bowler C."/>
            <person name="Dieckmann C.L."/>
            <person name="Gladyshev V.N."/>
            <person name="Green P."/>
            <person name="Jorgensen R."/>
            <person name="Mayfield S."/>
            <person name="Mueller-Roeber B."/>
            <person name="Rajamani S."/>
            <person name="Sayre R.T."/>
            <person name="Brokstein P."/>
            <person name="Dubchak I."/>
            <person name="Goodstein D."/>
            <person name="Hornick L."/>
            <person name="Huang Y.W."/>
            <person name="Jhaveri J."/>
            <person name="Luo Y."/>
            <person name="Martinez D."/>
            <person name="Ngau W.C."/>
            <person name="Otillar B."/>
            <person name="Poliakov A."/>
            <person name="Porter A."/>
            <person name="Szajkowski L."/>
            <person name="Werner G."/>
            <person name="Zhou K."/>
            <person name="Grigoriev I.V."/>
            <person name="Rokhsar D.S."/>
            <person name="Grossman A.R."/>
        </authorList>
    </citation>
    <scope>NUCLEOTIDE SEQUENCE [LARGE SCALE GENOMIC DNA]</scope>
    <source>
        <strain>CC-503</strain>
        <strain>cw92</strain>
    </source>
</reference>
<reference key="2">
    <citation type="journal article" date="1995" name="FEBS Lett.">
        <title>Isolation of CF0CF1 from Chlamydomonas reinhardtii cw15 and the N-terminal amino acid sequences of the CF0CF1 subunits.</title>
        <authorList>
            <person name="Fiedler H.R."/>
            <person name="Schmid R."/>
            <person name="Leu S."/>
            <person name="Shavit N."/>
            <person name="Strotmann H."/>
        </authorList>
    </citation>
    <scope>PROTEIN SEQUENCE OF 63-82</scope>
    <scope>FUNCTION</scope>
    <scope>SUBUNIT</scope>
    <scope>SUBCELLULAR LOCATION</scope>
    <source>
        <strain>cw15</strain>
    </source>
</reference>
<accession>A8J785</accession>
<accession>Q9S882</accession>
<proteinExistence type="evidence at protein level"/>
<organism>
    <name type="scientific">Chlamydomonas reinhardtii</name>
    <name type="common">Chlamydomonas smithii</name>
    <dbReference type="NCBI Taxonomy" id="3055"/>
    <lineage>
        <taxon>Eukaryota</taxon>
        <taxon>Viridiplantae</taxon>
        <taxon>Chlorophyta</taxon>
        <taxon>core chlorophytes</taxon>
        <taxon>Chlorophyceae</taxon>
        <taxon>CS clade</taxon>
        <taxon>Chlamydomonadales</taxon>
        <taxon>Chlamydomonadaceae</taxon>
        <taxon>Chlamydomonas</taxon>
    </lineage>
</organism>
<protein>
    <recommendedName>
        <fullName evidence="3">ATP synthase subunit b', chloroplastic</fullName>
    </recommendedName>
    <alternativeName>
        <fullName>ATP synthase F(0) sector subunit b'</fullName>
    </alternativeName>
    <alternativeName>
        <fullName>ATPase subunit II</fullName>
    </alternativeName>
</protein>
<dbReference type="EMBL" id="DS496140">
    <property type="protein sequence ID" value="EDP00272.1"/>
    <property type="molecule type" value="Genomic_DNA"/>
</dbReference>
<dbReference type="RefSeq" id="XP_001697332.1">
    <property type="nucleotide sequence ID" value="XM_001697280.1"/>
</dbReference>
<dbReference type="SMR" id="A8J785"/>
<dbReference type="PaxDb" id="3055-EDP00272"/>
<dbReference type="ProMEX" id="A8J785"/>
<dbReference type="EnsemblPlants" id="PNW76927">
    <property type="protein sequence ID" value="PNW76927"/>
    <property type="gene ID" value="CHLRE_11g481450v5"/>
</dbReference>
<dbReference type="GeneID" id="5722943"/>
<dbReference type="Gramene" id="PNW76927">
    <property type="protein sequence ID" value="PNW76927"/>
    <property type="gene ID" value="CHLRE_11g481450v5"/>
</dbReference>
<dbReference type="KEGG" id="cre:CHLRE_11g481450v5"/>
<dbReference type="eggNOG" id="ENOG502RH8G">
    <property type="taxonomic scope" value="Eukaryota"/>
</dbReference>
<dbReference type="HOGENOM" id="CLU_079215_0_2_1"/>
<dbReference type="OMA" id="PLMAIQF"/>
<dbReference type="OrthoDB" id="3819at2759"/>
<dbReference type="GO" id="GO:0009535">
    <property type="term" value="C:chloroplast thylakoid membrane"/>
    <property type="evidence" value="ECO:0007669"/>
    <property type="project" value="UniProtKB-SubCell"/>
</dbReference>
<dbReference type="GO" id="GO:0045259">
    <property type="term" value="C:proton-transporting ATP synthase complex"/>
    <property type="evidence" value="ECO:0007669"/>
    <property type="project" value="UniProtKB-KW"/>
</dbReference>
<dbReference type="GO" id="GO:0005524">
    <property type="term" value="F:ATP binding"/>
    <property type="evidence" value="ECO:0007669"/>
    <property type="project" value="UniProtKB-KW"/>
</dbReference>
<dbReference type="GO" id="GO:0015078">
    <property type="term" value="F:proton transmembrane transporter activity"/>
    <property type="evidence" value="ECO:0007669"/>
    <property type="project" value="InterPro"/>
</dbReference>
<dbReference type="GO" id="GO:0015986">
    <property type="term" value="P:proton motive force-driven ATP synthesis"/>
    <property type="evidence" value="ECO:0007669"/>
    <property type="project" value="InterPro"/>
</dbReference>
<dbReference type="CDD" id="cd06503">
    <property type="entry name" value="ATP-synt_Fo_b"/>
    <property type="match status" value="1"/>
</dbReference>
<dbReference type="HAMAP" id="MF_01398">
    <property type="entry name" value="ATP_synth_b_bprime"/>
    <property type="match status" value="1"/>
</dbReference>
<dbReference type="HAMAP" id="MF_01399">
    <property type="entry name" value="ATP_synth_bprime"/>
    <property type="match status" value="1"/>
</dbReference>
<dbReference type="InterPro" id="IPR034679">
    <property type="entry name" value="ATP_synth_b"/>
</dbReference>
<dbReference type="InterPro" id="IPR002146">
    <property type="entry name" value="ATP_synth_b/b'su_bac/chlpt"/>
</dbReference>
<dbReference type="InterPro" id="IPR050059">
    <property type="entry name" value="ATP_synthase_B_chain"/>
</dbReference>
<dbReference type="PANTHER" id="PTHR33445">
    <property type="entry name" value="ATP SYNTHASE SUBUNIT B', CHLOROPLASTIC"/>
    <property type="match status" value="1"/>
</dbReference>
<dbReference type="PANTHER" id="PTHR33445:SF2">
    <property type="entry name" value="ATP SYNTHASE SUBUNIT B', CHLOROPLASTIC"/>
    <property type="match status" value="1"/>
</dbReference>
<dbReference type="Pfam" id="PF00430">
    <property type="entry name" value="ATP-synt_B"/>
    <property type="match status" value="1"/>
</dbReference>
<feature type="transit peptide" description="Chloroplast" evidence="2">
    <location>
        <begin position="1"/>
        <end position="62"/>
    </location>
</feature>
<feature type="chain" id="PRO_0000388330" description="ATP synthase subunit b', chloroplastic">
    <location>
        <begin position="63"/>
        <end position="209"/>
    </location>
</feature>
<feature type="transmembrane region" description="Helical" evidence="1">
    <location>
        <begin position="67"/>
        <end position="87"/>
    </location>
</feature>
<feature type="sequence conflict" description="In Ref. 2; AA sequence." evidence="4" ref="2">
    <location>
        <position position="72"/>
    </location>
</feature>
<feature type="sequence conflict" description="In Ref. 2; AA sequence." evidence="4" ref="2">
    <original>F</original>
    <variation>E</variation>
    <location>
        <position position="81"/>
    </location>
</feature>